<evidence type="ECO:0000255" key="1">
    <source>
        <dbReference type="HAMAP-Rule" id="MF_01325"/>
    </source>
</evidence>
<evidence type="ECO:0000256" key="2">
    <source>
        <dbReference type="SAM" id="MobiDB-lite"/>
    </source>
</evidence>
<evidence type="ECO:0000305" key="3"/>
<comment type="function">
    <text evidence="1">One of the primary rRNA binding proteins, it binds directly near the 3'-end of the 23S rRNA, where it nucleates assembly of the 50S subunit.</text>
</comment>
<comment type="subunit">
    <text evidence="1">Part of the 50S ribosomal subunit. Forms a cluster with proteins L14 and L19.</text>
</comment>
<comment type="similarity">
    <text evidence="1">Belongs to the universal ribosomal protein uL3 family.</text>
</comment>
<proteinExistence type="inferred from homology"/>
<feature type="chain" id="PRO_1000052130" description="Large ribosomal subunit protein uL3">
    <location>
        <begin position="1"/>
        <end position="210"/>
    </location>
</feature>
<feature type="region of interest" description="Disordered" evidence="2">
    <location>
        <begin position="125"/>
        <end position="151"/>
    </location>
</feature>
<protein>
    <recommendedName>
        <fullName evidence="1">Large ribosomal subunit protein uL3</fullName>
    </recommendedName>
    <alternativeName>
        <fullName evidence="3">50S ribosomal protein L3</fullName>
    </alternativeName>
</protein>
<organism>
    <name type="scientific">Roseiflexus sp. (strain RS-1)</name>
    <dbReference type="NCBI Taxonomy" id="357808"/>
    <lineage>
        <taxon>Bacteria</taxon>
        <taxon>Bacillati</taxon>
        <taxon>Chloroflexota</taxon>
        <taxon>Chloroflexia</taxon>
        <taxon>Chloroflexales</taxon>
        <taxon>Roseiflexineae</taxon>
        <taxon>Roseiflexaceae</taxon>
        <taxon>Roseiflexus</taxon>
    </lineage>
</organism>
<name>RL3_ROSS1</name>
<reference key="1">
    <citation type="submission" date="2007-04" db="EMBL/GenBank/DDBJ databases">
        <title>Complete sequence of Roseiflexus sp. RS-1.</title>
        <authorList>
            <consortium name="US DOE Joint Genome Institute"/>
            <person name="Copeland A."/>
            <person name="Lucas S."/>
            <person name="Lapidus A."/>
            <person name="Barry K."/>
            <person name="Detter J.C."/>
            <person name="Glavina del Rio T."/>
            <person name="Hammon N."/>
            <person name="Israni S."/>
            <person name="Dalin E."/>
            <person name="Tice H."/>
            <person name="Pitluck S."/>
            <person name="Chertkov O."/>
            <person name="Brettin T."/>
            <person name="Bruce D."/>
            <person name="Han C."/>
            <person name="Schmutz J."/>
            <person name="Larimer F."/>
            <person name="Land M."/>
            <person name="Hauser L."/>
            <person name="Kyrpides N."/>
            <person name="Mikhailova N."/>
            <person name="Bryant D.A."/>
            <person name="Richardson P."/>
        </authorList>
    </citation>
    <scope>NUCLEOTIDE SEQUENCE [LARGE SCALE GENOMIC DNA]</scope>
    <source>
        <strain>RS-1</strain>
    </source>
</reference>
<sequence length="210" mass="22671">MIEGLLGRKIGMTQVFDATGQVIPVTIIEVGPCVVTQIRTKERDGYEAVQIGYQEVKAKSLTRPEQGHLRGAGKLLRHLREFRADNIADHKVGDVLTVEMFTPGQRVDVIGTSKGRGFQGVVKRHGFGGGPRTHGQSDRLRAPGSIGAGTDPGHVLKNTRMAGRMGNQRVTVQNLTVVDVVPERNLLLVRGSIPGAKNGLVMVRRAIKGS</sequence>
<accession>A5USI9</accession>
<gene>
    <name evidence="1" type="primary">rplC</name>
    <name type="ordered locus">RoseRS_1185</name>
</gene>
<dbReference type="EMBL" id="CP000686">
    <property type="protein sequence ID" value="ABQ89592.1"/>
    <property type="molecule type" value="Genomic_DNA"/>
</dbReference>
<dbReference type="SMR" id="A5USI9"/>
<dbReference type="STRING" id="357808.RoseRS_1185"/>
<dbReference type="KEGG" id="rrs:RoseRS_1185"/>
<dbReference type="eggNOG" id="COG0087">
    <property type="taxonomic scope" value="Bacteria"/>
</dbReference>
<dbReference type="HOGENOM" id="CLU_044142_4_1_0"/>
<dbReference type="OrthoDB" id="9806135at2"/>
<dbReference type="Proteomes" id="UP000006554">
    <property type="component" value="Chromosome"/>
</dbReference>
<dbReference type="GO" id="GO:0022625">
    <property type="term" value="C:cytosolic large ribosomal subunit"/>
    <property type="evidence" value="ECO:0007669"/>
    <property type="project" value="TreeGrafter"/>
</dbReference>
<dbReference type="GO" id="GO:0019843">
    <property type="term" value="F:rRNA binding"/>
    <property type="evidence" value="ECO:0007669"/>
    <property type="project" value="UniProtKB-UniRule"/>
</dbReference>
<dbReference type="GO" id="GO:0003735">
    <property type="term" value="F:structural constituent of ribosome"/>
    <property type="evidence" value="ECO:0007669"/>
    <property type="project" value="InterPro"/>
</dbReference>
<dbReference type="GO" id="GO:0006412">
    <property type="term" value="P:translation"/>
    <property type="evidence" value="ECO:0007669"/>
    <property type="project" value="UniProtKB-UniRule"/>
</dbReference>
<dbReference type="FunFam" id="2.40.30.10:FF:000004">
    <property type="entry name" value="50S ribosomal protein L3"/>
    <property type="match status" value="1"/>
</dbReference>
<dbReference type="FunFam" id="3.30.160.810:FF:000001">
    <property type="entry name" value="50S ribosomal protein L3"/>
    <property type="match status" value="1"/>
</dbReference>
<dbReference type="Gene3D" id="3.30.160.810">
    <property type="match status" value="1"/>
</dbReference>
<dbReference type="Gene3D" id="2.40.30.10">
    <property type="entry name" value="Translation factors"/>
    <property type="match status" value="1"/>
</dbReference>
<dbReference type="HAMAP" id="MF_01325_B">
    <property type="entry name" value="Ribosomal_uL3_B"/>
    <property type="match status" value="1"/>
</dbReference>
<dbReference type="InterPro" id="IPR000597">
    <property type="entry name" value="Ribosomal_uL3"/>
</dbReference>
<dbReference type="InterPro" id="IPR019927">
    <property type="entry name" value="Ribosomal_uL3_bac/org-type"/>
</dbReference>
<dbReference type="InterPro" id="IPR019926">
    <property type="entry name" value="Ribosomal_uL3_CS"/>
</dbReference>
<dbReference type="InterPro" id="IPR009000">
    <property type="entry name" value="Transl_B-barrel_sf"/>
</dbReference>
<dbReference type="NCBIfam" id="TIGR03625">
    <property type="entry name" value="L3_bact"/>
    <property type="match status" value="1"/>
</dbReference>
<dbReference type="PANTHER" id="PTHR11229">
    <property type="entry name" value="50S RIBOSOMAL PROTEIN L3"/>
    <property type="match status" value="1"/>
</dbReference>
<dbReference type="PANTHER" id="PTHR11229:SF16">
    <property type="entry name" value="LARGE RIBOSOMAL SUBUNIT PROTEIN UL3C"/>
    <property type="match status" value="1"/>
</dbReference>
<dbReference type="Pfam" id="PF00297">
    <property type="entry name" value="Ribosomal_L3"/>
    <property type="match status" value="1"/>
</dbReference>
<dbReference type="SUPFAM" id="SSF50447">
    <property type="entry name" value="Translation proteins"/>
    <property type="match status" value="1"/>
</dbReference>
<dbReference type="PROSITE" id="PS00474">
    <property type="entry name" value="RIBOSOMAL_L3"/>
    <property type="match status" value="1"/>
</dbReference>
<keyword id="KW-0687">Ribonucleoprotein</keyword>
<keyword id="KW-0689">Ribosomal protein</keyword>
<keyword id="KW-0694">RNA-binding</keyword>
<keyword id="KW-0699">rRNA-binding</keyword>